<gene>
    <name type="primary">LAMTOR1</name>
</gene>
<comment type="function">
    <text evidence="1 3">Key component of the Ragulator complex, a multiprotein complex involved in amino acid sensing and activation of mTORC1, a signaling complex promoting cell growth in response to growth factors, energy levels, and amino acids. Activated by amino acids through a mechanism involving the lysosomal V-ATPase, the Ragulator plays a dual role for the small GTPases Rag (RagA/RRAGA, RagB/RRAGB, RagC/RRAGC and/or RagD/RRAGD): it (1) acts as a guanine nucleotide exchange factor (GEF), activating the small GTPases Rag and (2) mediates recruitment of Rag GTPases to the lysosome membrane. Activated Ragulator and Rag GTPases function as a scaffold recruiting mTORC1 to lysosomes where it is in turn activated. LAMTOR1 is directly responsible for anchoring the Ragulator complex to the lysosomal membrane. LAMTOR1 wraps around the other subunits of the Ragulator complex to hold them in place and interacts with the Rag GTPases, thereby playing a key role in the recruitment of the mTORC1 complex to lysosomes (By similarity). Also involved in the control of embryonic stem cells differentiation via non-canonical RagC/RRAGC and RagD/RRAGD activation: together with FLCN, it is necessary to recruit and activate RagC/RRAGC and RagD/RRAGD at the lysosomes, and to induce exit of embryonic stem cells from pluripotency via non-canonical, mTOR-independent TFE3 inactivation (By similarity). Also required for late endosomes/lysosomes biogenesis it may regulate both the recycling of receptors through endosomes and the MAPK signaling pathway through recruitment of some of its components to late endosomes. May be involved in cholesterol homeostasis regulating LDL uptake and cholesterol release from late endosomes/lysosomes. May also play a role in RHOA activation (By similarity).</text>
</comment>
<comment type="subunit">
    <text evidence="1">Part of the Ragulator complex composed of LAMTOR1, LAMTOR2, LAMTOR3, LAMTOR4 and LAMTOR5. LAMTOR4 and LAMTOR5 form a heterodimer that interacts, through LAMTOR1, with a LAMTOR2, LAMTOR3 heterodimer. Interacts with LAMTOR2 and LAMTOR3; the interaction is direct. The Ragulator complex interacts with both the mTORC1 complex and heterodimers constituted of the Rag GTPases RagA/RRAGA, RagB/RRAGB, RagC/RRAGC and RagD/RRAGD; regulated by amino acid availability. The Ragulator complex interacts with SLC38A9; the probable amino acid sensor. Component of the lysosomal folliculin complex (LFC), composed of FLCN, FNIP1 (or FNIP2), RagA/RRAGA or RagB/RRAGB GDP-bound, RagC/RRAGC or RagD/RRAGD GTP-bound, and Ragulator. Associates with the lysosomal V-ATPase complex; interaction promotes the guanine nucleotide exchange factor (GEF) of the Ragulator complex. Interacts with MMP14. Interacts with CDKN1B; prevents the interaction of CDKN1B with RHOA leaving RHOA in a form accessible to activation by ARHGEF2. Interacts with PIP4P1.</text>
</comment>
<comment type="subcellular location">
    <subcellularLocation>
        <location evidence="1">Lysosome membrane</location>
        <topology evidence="1">Lipid-anchor</topology>
        <orientation evidence="1">Cytoplasmic side</orientation>
    </subcellularLocation>
    <subcellularLocation>
        <location evidence="1">Late endosome membrane</location>
        <topology evidence="1">Lipid-anchor</topology>
        <orientation evidence="1">Cytoplasmic side</orientation>
    </subcellularLocation>
    <text evidence="1">Recruited to lysosome and endosome membranes through N-terminal myristoylation and palmitoylation.</text>
</comment>
<comment type="PTM">
    <text evidence="1">N-terminal myristoylation and palmitoylation mediates its recruitment to lysosome membranes, thereby promoting localization of the Ragulator complex to lysosomes. N-myristoylation by NMT1 is required for palmitoylation at Cys-3 and Cys-4. May be palmitoylated by ZDHHC3.</text>
</comment>
<comment type="PTM">
    <text evidence="1">Ubiquitinated at Lys-60, Lys-103 and Lys-104 by UBE3A, promoting its degradation by the proteasome. Ubiquitination at Lys-20 impairs the association with the lysosomal V-ATPase complex. Deubiquitination at Lys-20 by USP32 promotes the association with the lysosomal V-ATPase complex and subsequent activation of the mTORC1 complex.</text>
</comment>
<comment type="similarity">
    <text evidence="5">Belongs to the LAMTOR1 family.</text>
</comment>
<protein>
    <recommendedName>
        <fullName>Ragulator complex protein LAMTOR1</fullName>
    </recommendedName>
    <alternativeName>
        <fullName>Late endosomal/lysosomal adaptor and MAPK and MTOR activator 1</fullName>
    </alternativeName>
</protein>
<dbReference type="EMBL" id="BC102442">
    <property type="protein sequence ID" value="AAI02443.1"/>
    <property type="molecule type" value="mRNA"/>
</dbReference>
<dbReference type="RefSeq" id="NP_001029941.1">
    <property type="nucleotide sequence ID" value="NM_001034769.1"/>
</dbReference>
<dbReference type="SMR" id="Q3T0D8"/>
<dbReference type="FunCoup" id="Q3T0D8">
    <property type="interactions" value="2576"/>
</dbReference>
<dbReference type="STRING" id="9913.ENSBTAP00000059517"/>
<dbReference type="PaxDb" id="9913-ENSBTAP00000003907"/>
<dbReference type="PeptideAtlas" id="Q3T0D8"/>
<dbReference type="GeneID" id="614849"/>
<dbReference type="KEGG" id="bta:614849"/>
<dbReference type="CTD" id="55004"/>
<dbReference type="VEuPathDB" id="HostDB:ENSBTAG00000003001"/>
<dbReference type="eggNOG" id="ENOG502RYX2">
    <property type="taxonomic scope" value="Eukaryota"/>
</dbReference>
<dbReference type="HOGENOM" id="CLU_136283_1_0_1"/>
<dbReference type="InParanoid" id="Q3T0D8"/>
<dbReference type="OMA" id="MGCCYSF"/>
<dbReference type="OrthoDB" id="5562028at2759"/>
<dbReference type="TreeFam" id="TF323788"/>
<dbReference type="Reactome" id="R-BTA-1632852">
    <property type="pathway name" value="Macroautophagy"/>
</dbReference>
<dbReference type="Reactome" id="R-BTA-165159">
    <property type="pathway name" value="MTOR signalling"/>
</dbReference>
<dbReference type="Reactome" id="R-BTA-166208">
    <property type="pathway name" value="mTORC1-mediated signalling"/>
</dbReference>
<dbReference type="Reactome" id="R-BTA-380972">
    <property type="pathway name" value="Energy dependent regulation of mTOR by LKB1-AMPK"/>
</dbReference>
<dbReference type="Reactome" id="R-BTA-5628897">
    <property type="pathway name" value="TP53 Regulates Metabolic Genes"/>
</dbReference>
<dbReference type="Reactome" id="R-BTA-6798695">
    <property type="pathway name" value="Neutrophil degranulation"/>
</dbReference>
<dbReference type="Reactome" id="R-BTA-8943724">
    <property type="pathway name" value="Regulation of PTEN gene transcription"/>
</dbReference>
<dbReference type="Reactome" id="R-BTA-9013149">
    <property type="pathway name" value="RAC1 GTPase cycle"/>
</dbReference>
<dbReference type="Reactome" id="R-BTA-9013404">
    <property type="pathway name" value="RAC2 GTPase cycle"/>
</dbReference>
<dbReference type="Reactome" id="R-BTA-9013406">
    <property type="pathway name" value="RHOQ GTPase cycle"/>
</dbReference>
<dbReference type="Reactome" id="R-BTA-9013407">
    <property type="pathway name" value="RHOH GTPase cycle"/>
</dbReference>
<dbReference type="Reactome" id="R-BTA-9013408">
    <property type="pathway name" value="RHOG GTPase cycle"/>
</dbReference>
<dbReference type="Reactome" id="R-BTA-9013423">
    <property type="pathway name" value="RAC3 GTPase cycle"/>
</dbReference>
<dbReference type="Reactome" id="R-BTA-9639288">
    <property type="pathway name" value="Amino acids regulate mTORC1"/>
</dbReference>
<dbReference type="Proteomes" id="UP000009136">
    <property type="component" value="Chromosome 15"/>
</dbReference>
<dbReference type="Bgee" id="ENSBTAG00000003001">
    <property type="expression patterns" value="Expressed in monocyte and 105 other cell types or tissues"/>
</dbReference>
<dbReference type="GO" id="GO:0031902">
    <property type="term" value="C:late endosome membrane"/>
    <property type="evidence" value="ECO:0000250"/>
    <property type="project" value="UniProtKB"/>
</dbReference>
<dbReference type="GO" id="GO:0005765">
    <property type="term" value="C:lysosomal membrane"/>
    <property type="evidence" value="ECO:0000250"/>
    <property type="project" value="UniProtKB"/>
</dbReference>
<dbReference type="GO" id="GO:0005764">
    <property type="term" value="C:lysosome"/>
    <property type="evidence" value="ECO:0000250"/>
    <property type="project" value="UniProtKB"/>
</dbReference>
<dbReference type="GO" id="GO:0045121">
    <property type="term" value="C:membrane raft"/>
    <property type="evidence" value="ECO:0000250"/>
    <property type="project" value="UniProtKB"/>
</dbReference>
<dbReference type="GO" id="GO:0071986">
    <property type="term" value="C:Ragulator complex"/>
    <property type="evidence" value="ECO:0000250"/>
    <property type="project" value="UniProtKB"/>
</dbReference>
<dbReference type="GO" id="GO:0043495">
    <property type="term" value="F:protein-membrane adaptor activity"/>
    <property type="evidence" value="ECO:0000250"/>
    <property type="project" value="UniProtKB"/>
</dbReference>
<dbReference type="GO" id="GO:0071230">
    <property type="term" value="P:cellular response to amino acid stimulus"/>
    <property type="evidence" value="ECO:0000250"/>
    <property type="project" value="UniProtKB"/>
</dbReference>
<dbReference type="GO" id="GO:0042632">
    <property type="term" value="P:cholesterol homeostasis"/>
    <property type="evidence" value="ECO:0000250"/>
    <property type="project" value="UniProtKB"/>
</dbReference>
<dbReference type="GO" id="GO:0016197">
    <property type="term" value="P:endosomal transport"/>
    <property type="evidence" value="ECO:0000250"/>
    <property type="project" value="UniProtKB"/>
</dbReference>
<dbReference type="GO" id="GO:0007032">
    <property type="term" value="P:endosome organization"/>
    <property type="evidence" value="ECO:0000250"/>
    <property type="project" value="UniProtKB"/>
</dbReference>
<dbReference type="GO" id="GO:0032418">
    <property type="term" value="P:lysosome localization"/>
    <property type="evidence" value="ECO:0000250"/>
    <property type="project" value="UniProtKB"/>
</dbReference>
<dbReference type="GO" id="GO:0007040">
    <property type="term" value="P:lysosome organization"/>
    <property type="evidence" value="ECO:0000250"/>
    <property type="project" value="UniProtKB"/>
</dbReference>
<dbReference type="GO" id="GO:0043410">
    <property type="term" value="P:positive regulation of MAPK cascade"/>
    <property type="evidence" value="ECO:0000250"/>
    <property type="project" value="UniProtKB"/>
</dbReference>
<dbReference type="GO" id="GO:0032008">
    <property type="term" value="P:positive regulation of TOR signaling"/>
    <property type="evidence" value="ECO:0000250"/>
    <property type="project" value="UniProtKB"/>
</dbReference>
<dbReference type="GO" id="GO:1904263">
    <property type="term" value="P:positive regulation of TORC1 signaling"/>
    <property type="evidence" value="ECO:0000250"/>
    <property type="project" value="UniProtKB"/>
</dbReference>
<dbReference type="GO" id="GO:0008104">
    <property type="term" value="P:protein localization"/>
    <property type="evidence" value="ECO:0000250"/>
    <property type="project" value="UniProtKB"/>
</dbReference>
<dbReference type="GO" id="GO:0072657">
    <property type="term" value="P:protein localization to membrane"/>
    <property type="evidence" value="ECO:0000250"/>
    <property type="project" value="UniProtKB"/>
</dbReference>
<dbReference type="GO" id="GO:0001558">
    <property type="term" value="P:regulation of cell growth"/>
    <property type="evidence" value="ECO:0000250"/>
    <property type="project" value="UniProtKB"/>
</dbReference>
<dbReference type="GO" id="GO:0010874">
    <property type="term" value="P:regulation of cholesterol efflux"/>
    <property type="evidence" value="ECO:0000250"/>
    <property type="project" value="UniProtKB"/>
</dbReference>
<dbReference type="GO" id="GO:0060620">
    <property type="term" value="P:regulation of cholesterol import"/>
    <property type="evidence" value="ECO:0000250"/>
    <property type="project" value="UniProtKB"/>
</dbReference>
<dbReference type="GO" id="GO:0001919">
    <property type="term" value="P:regulation of receptor recycling"/>
    <property type="evidence" value="ECO:0000250"/>
    <property type="project" value="UniProtKB"/>
</dbReference>
<dbReference type="InterPro" id="IPR028209">
    <property type="entry name" value="LAMTOR1/MEH1"/>
</dbReference>
<dbReference type="PANTHER" id="PTHR13401">
    <property type="entry name" value="RAGULATOR COMPLEX PROTEIN LAMTOR1"/>
    <property type="match status" value="1"/>
</dbReference>
<dbReference type="PANTHER" id="PTHR13401:SF2">
    <property type="entry name" value="RAGULATOR COMPLEX PROTEIN LAMTOR1"/>
    <property type="match status" value="1"/>
</dbReference>
<dbReference type="Pfam" id="PF15454">
    <property type="entry name" value="LAMTOR"/>
    <property type="match status" value="1"/>
</dbReference>
<dbReference type="SMART" id="SM01262">
    <property type="entry name" value="LAMTOR"/>
    <property type="match status" value="1"/>
</dbReference>
<keyword id="KW-0967">Endosome</keyword>
<keyword id="KW-1017">Isopeptide bond</keyword>
<keyword id="KW-0449">Lipoprotein</keyword>
<keyword id="KW-0458">Lysosome</keyword>
<keyword id="KW-0472">Membrane</keyword>
<keyword id="KW-0519">Myristate</keyword>
<keyword id="KW-0564">Palmitate</keyword>
<keyword id="KW-0597">Phosphoprotein</keyword>
<keyword id="KW-1185">Reference proteome</keyword>
<keyword id="KW-0832">Ubl conjugation</keyword>
<accession>Q3T0D8</accession>
<proteinExistence type="evidence at transcript level"/>
<feature type="initiator methionine" description="Removed" evidence="1">
    <location>
        <position position="1"/>
    </location>
</feature>
<feature type="chain" id="PRO_0000274291" description="Ragulator complex protein LAMTOR1">
    <location>
        <begin position="2"/>
        <end position="161"/>
    </location>
</feature>
<feature type="region of interest" description="Disordered" evidence="4">
    <location>
        <begin position="1"/>
        <end position="43"/>
    </location>
</feature>
<feature type="region of interest" description="Interaction with LAMTOR2 and LAMTOR3" evidence="2">
    <location>
        <begin position="121"/>
        <end position="161"/>
    </location>
</feature>
<feature type="modified residue" description="Phosphoserine" evidence="1">
    <location>
        <position position="27"/>
    </location>
</feature>
<feature type="modified residue" description="Phosphoserine" evidence="1">
    <location>
        <position position="42"/>
    </location>
</feature>
<feature type="modified residue" description="Phosphoserine" evidence="1">
    <location>
        <position position="56"/>
    </location>
</feature>
<feature type="modified residue" description="Phosphoserine" evidence="1">
    <location>
        <position position="98"/>
    </location>
</feature>
<feature type="modified residue" description="Phosphoserine" evidence="1">
    <location>
        <position position="141"/>
    </location>
</feature>
<feature type="lipid moiety-binding region" description="N-myristoyl glycine" evidence="1">
    <location>
        <position position="2"/>
    </location>
</feature>
<feature type="lipid moiety-binding region" description="S-palmitoyl cysteine" evidence="1">
    <location>
        <position position="3"/>
    </location>
</feature>
<feature type="lipid moiety-binding region" description="S-palmitoyl cysteine" evidence="1">
    <location>
        <position position="4"/>
    </location>
</feature>
<feature type="cross-link" description="Glycyl lysine isopeptide (Lys-Gly) (interchain with G-Cter in ubiquitin)" evidence="1">
    <location>
        <position position="20"/>
    </location>
</feature>
<feature type="cross-link" description="Glycyl lysine isopeptide (Lys-Gly) (interchain with G-Cter in ubiquitin)" evidence="1">
    <location>
        <position position="31"/>
    </location>
</feature>
<feature type="cross-link" description="Glycyl lysine isopeptide (Lys-Gly) (interchain with G-Cter in ubiquitin)" evidence="1">
    <location>
        <position position="60"/>
    </location>
</feature>
<feature type="cross-link" description="Glycyl lysine isopeptide (Lys-Gly) (interchain with G-Cter in ubiquitin)" evidence="3">
    <location>
        <position position="103"/>
    </location>
</feature>
<feature type="cross-link" description="Glycyl lysine isopeptide (Lys-Gly) (interchain with G-Cter in ubiquitin)" evidence="3">
    <location>
        <position position="104"/>
    </location>
</feature>
<organism>
    <name type="scientific">Bos taurus</name>
    <name type="common">Bovine</name>
    <dbReference type="NCBI Taxonomy" id="9913"/>
    <lineage>
        <taxon>Eukaryota</taxon>
        <taxon>Metazoa</taxon>
        <taxon>Chordata</taxon>
        <taxon>Craniata</taxon>
        <taxon>Vertebrata</taxon>
        <taxon>Euteleostomi</taxon>
        <taxon>Mammalia</taxon>
        <taxon>Eutheria</taxon>
        <taxon>Laurasiatheria</taxon>
        <taxon>Artiodactyla</taxon>
        <taxon>Ruminantia</taxon>
        <taxon>Pecora</taxon>
        <taxon>Bovidae</taxon>
        <taxon>Bovinae</taxon>
        <taxon>Bos</taxon>
    </lineage>
</organism>
<evidence type="ECO:0000250" key="1">
    <source>
        <dbReference type="UniProtKB" id="Q6IAA8"/>
    </source>
</evidence>
<evidence type="ECO:0000250" key="2">
    <source>
        <dbReference type="UniProtKB" id="Q6P791"/>
    </source>
</evidence>
<evidence type="ECO:0000250" key="3">
    <source>
        <dbReference type="UniProtKB" id="Q9CQ22"/>
    </source>
</evidence>
<evidence type="ECO:0000256" key="4">
    <source>
        <dbReference type="SAM" id="MobiDB-lite"/>
    </source>
</evidence>
<evidence type="ECO:0000305" key="5"/>
<name>LTOR1_BOVIN</name>
<reference key="1">
    <citation type="submission" date="2005-08" db="EMBL/GenBank/DDBJ databases">
        <authorList>
            <consortium name="NIH - Mammalian Gene Collection (MGC) project"/>
        </authorList>
    </citation>
    <scope>NUCLEOTIDE SEQUENCE [LARGE SCALE MRNA]</scope>
    <source>
        <strain>Crossbred X Angus</strain>
        <tissue>Ileum</tissue>
    </source>
</reference>
<sequence length="161" mass="17731">MGCCYSSENEDSDQDREERKLLLDPSSPPTKALNGAEPNYHSLPSARTDEQALLSSILAKTASNIIDVSAADSQGMEQHEYMDRARQYSTRLAVLSSSLTHWKKLPPLPSLTSQPHQVLASEPVPFSDLQQVSRIAAYAYSALSQIRVDAKEELVVQFGIP</sequence>